<protein>
    <recommendedName>
        <fullName>Tryptophan synthase</fullName>
        <ecNumber>4.2.1.20</ecNumber>
    </recommendedName>
</protein>
<feature type="chain" id="PRO_0000098723" description="Tryptophan synthase">
    <location>
        <begin position="1"/>
        <end position="705"/>
    </location>
</feature>
<feature type="region of interest" description="Tryptophan synthase alpha chain">
    <location>
        <begin position="1"/>
        <end position="293"/>
    </location>
</feature>
<feature type="region of interest" description="Disordered" evidence="2">
    <location>
        <begin position="266"/>
        <end position="287"/>
    </location>
</feature>
<feature type="region of interest" description="Tryptophan synthase beta chain">
    <location>
        <begin position="294"/>
        <end position="705"/>
    </location>
</feature>
<feature type="active site" description="Proton acceptor" evidence="1">
    <location>
        <position position="49"/>
    </location>
</feature>
<feature type="active site" description="Proton acceptor" evidence="1">
    <location>
        <position position="60"/>
    </location>
</feature>
<feature type="modified residue" description="N6-(pyridoxal phosphate)lysine" evidence="1">
    <location>
        <position position="381"/>
    </location>
</feature>
<accession>P16578</accession>
<accession>Q12576</accession>
<name>TRP_COPCI</name>
<reference key="1">
    <citation type="journal article" date="1989" name="Gene">
        <title>Molecular characterization of TRP1, a gene coding for tryptophan synthetase in the basidiomycete Coprinus cinereus.</title>
        <authorList>
            <person name="Skrzynia C."/>
            <person name="Binninger D.M."/>
            <person name="Alspaugh J.A. II"/>
            <person name="Pukkila P.J."/>
        </authorList>
    </citation>
    <scope>NUCLEOTIDE SEQUENCE [GENOMIC DNA]</scope>
    <source>
        <strain>H9 X 12890/3</strain>
    </source>
</reference>
<sequence>MEAIKKVFEQKKAQDATAFVAFVTAGYPKKEDTVPVLLALQAGGADIIELGIPFSDPIADGPVIQEANTVALKNDIDYPTVLGQIREARQQGLTAPVLLMGYYNPMLAYGEDKAIQDAAEAGANGFIMVDLPPEEAIAFRQKCAASNLSYVPLIAPSTTLKRIQFLASIADSFIYVVSKMGTTGSSANVAVNEELPTILSRIREYTHVPLAVEFGVATRDQFNYVADAGADGVVVIGSRIVNAIKAAGEGQVPQFVENYCREVSGKGEPSRVRSPGAAQRTPSQLTPNAETAKGVENILPARFGQFGGQYVPESLVDALAELEEAHKSAIEDPAFWEEVRSLYTYSNRPSNLYLAENLTKEAGGANIWLKREDLNHTGSHKINNALGQILLAKRIGKTRIIAETGAGQHGVATATVCAKFGLECVIYMGAEDVRRQALKLFRIEMLGGKAWVIPVHSGSCTLKDAVNEAMRDWVTNLSTTHYLVGSAIGPHPFPTIVRDFQKVIGEEIKAQLKEVRGKLPDVVVACVGGGSNAIGTFYDFIPDKSVRLVGVEAGGEGIDGHKHSATLSMGQPGVLHGVRTYILQDKAGQIIETHSISAGLDYPGVGPEHAWLKDSGRADYVVCTDEDALRGFRMLTQKEGIIPALESSHAIWEGVKIAKSLPKDKDIVICLSGRGDKDVEQISELLPKWADKLDWHVSSNAIPSK</sequence>
<organism>
    <name type="scientific">Coprinopsis cinerea</name>
    <name type="common">Inky cap fungus</name>
    <name type="synonym">Hormographiella aspergillata</name>
    <dbReference type="NCBI Taxonomy" id="5346"/>
    <lineage>
        <taxon>Eukaryota</taxon>
        <taxon>Fungi</taxon>
        <taxon>Dikarya</taxon>
        <taxon>Basidiomycota</taxon>
        <taxon>Agaricomycotina</taxon>
        <taxon>Agaricomycetes</taxon>
        <taxon>Agaricomycetidae</taxon>
        <taxon>Agaricales</taxon>
        <taxon>Agaricineae</taxon>
        <taxon>Psathyrellaceae</taxon>
        <taxon>Coprinopsis</taxon>
    </lineage>
</organism>
<proteinExistence type="inferred from homology"/>
<keyword id="KW-0028">Amino-acid biosynthesis</keyword>
<keyword id="KW-0057">Aromatic amino acid biosynthesis</keyword>
<keyword id="KW-0456">Lyase</keyword>
<keyword id="KW-0663">Pyridoxal phosphate</keyword>
<keyword id="KW-0822">Tryptophan biosynthesis</keyword>
<comment type="catalytic activity">
    <reaction>
        <text>(1S,2R)-1-C-(indol-3-yl)glycerol 3-phosphate + L-serine = D-glyceraldehyde 3-phosphate + L-tryptophan + H2O</text>
        <dbReference type="Rhea" id="RHEA:10532"/>
        <dbReference type="ChEBI" id="CHEBI:15377"/>
        <dbReference type="ChEBI" id="CHEBI:33384"/>
        <dbReference type="ChEBI" id="CHEBI:57912"/>
        <dbReference type="ChEBI" id="CHEBI:58866"/>
        <dbReference type="ChEBI" id="CHEBI:59776"/>
        <dbReference type="EC" id="4.2.1.20"/>
    </reaction>
</comment>
<comment type="cofactor">
    <cofactor>
        <name>pyridoxal 5'-phosphate</name>
        <dbReference type="ChEBI" id="CHEBI:597326"/>
    </cofactor>
</comment>
<comment type="pathway">
    <text>Amino-acid biosynthesis; L-tryptophan biosynthesis; L-tryptophan from chorismate: step 5/5.</text>
</comment>
<comment type="similarity">
    <text evidence="3">In the N-terminal section; belongs to the TrpA family.</text>
</comment>
<comment type="similarity">
    <text evidence="3">In the C-terminal section; belongs to the TrpB family.</text>
</comment>
<comment type="sequence caution" evidence="3">
    <conflict type="erroneous gene model prediction">
        <sequence resource="EMBL-CDS" id="AAP79219"/>
    </conflict>
</comment>
<comment type="sequence caution" evidence="3">
    <conflict type="frameshift">
        <sequence resource="EMBL-CDS" id="AAP79219"/>
    </conflict>
</comment>
<gene>
    <name type="primary">TRP-1</name>
</gene>
<dbReference type="EC" id="4.2.1.20"/>
<dbReference type="EMBL" id="AY326438">
    <property type="protein sequence ID" value="AAP79219.1"/>
    <property type="status" value="ALT_SEQ"/>
    <property type="molecule type" value="Genomic_DNA"/>
</dbReference>
<dbReference type="PIR" id="JU0401">
    <property type="entry name" value="JU0401"/>
</dbReference>
<dbReference type="SMR" id="P16578"/>
<dbReference type="VEuPathDB" id="FungiDB:CC1G_13871"/>
<dbReference type="VEuPathDB" id="FungiDB:CC2G_005440"/>
<dbReference type="UniPathway" id="UPA00035">
    <property type="reaction ID" value="UER00044"/>
</dbReference>
<dbReference type="GO" id="GO:0005737">
    <property type="term" value="C:cytoplasm"/>
    <property type="evidence" value="ECO:0007669"/>
    <property type="project" value="TreeGrafter"/>
</dbReference>
<dbReference type="GO" id="GO:0004834">
    <property type="term" value="F:tryptophan synthase activity"/>
    <property type="evidence" value="ECO:0007669"/>
    <property type="project" value="UniProtKB-EC"/>
</dbReference>
<dbReference type="CDD" id="cd06446">
    <property type="entry name" value="Trp-synth_B"/>
    <property type="match status" value="1"/>
</dbReference>
<dbReference type="CDD" id="cd04724">
    <property type="entry name" value="Tryptophan_synthase_alpha"/>
    <property type="match status" value="1"/>
</dbReference>
<dbReference type="FunFam" id="3.20.20.70:FF:000151">
    <property type="entry name" value="Tryptophan synthase"/>
    <property type="match status" value="1"/>
</dbReference>
<dbReference type="FunFam" id="3.40.50.1100:FF:000001">
    <property type="entry name" value="Tryptophan synthase beta chain"/>
    <property type="match status" value="1"/>
</dbReference>
<dbReference type="FunFam" id="3.40.50.1100:FF:000004">
    <property type="entry name" value="Tryptophan synthase beta chain"/>
    <property type="match status" value="1"/>
</dbReference>
<dbReference type="Gene3D" id="3.40.50.1100">
    <property type="match status" value="2"/>
</dbReference>
<dbReference type="Gene3D" id="3.20.20.70">
    <property type="entry name" value="Aldolase class I"/>
    <property type="match status" value="1"/>
</dbReference>
<dbReference type="HAMAP" id="MF_00131">
    <property type="entry name" value="Trp_synth_alpha"/>
    <property type="match status" value="1"/>
</dbReference>
<dbReference type="HAMAP" id="MF_00133">
    <property type="entry name" value="Trp_synth_beta"/>
    <property type="match status" value="1"/>
</dbReference>
<dbReference type="InterPro" id="IPR013785">
    <property type="entry name" value="Aldolase_TIM"/>
</dbReference>
<dbReference type="InterPro" id="IPR011060">
    <property type="entry name" value="RibuloseP-bd_barrel"/>
</dbReference>
<dbReference type="InterPro" id="IPR006653">
    <property type="entry name" value="Trp_synth_b_CS"/>
</dbReference>
<dbReference type="InterPro" id="IPR006654">
    <property type="entry name" value="Trp_synth_beta"/>
</dbReference>
<dbReference type="InterPro" id="IPR023026">
    <property type="entry name" value="Trp_synth_beta/beta-like"/>
</dbReference>
<dbReference type="InterPro" id="IPR018204">
    <property type="entry name" value="Trp_synthase_alpha_AS"/>
</dbReference>
<dbReference type="InterPro" id="IPR002028">
    <property type="entry name" value="Trp_synthase_suA"/>
</dbReference>
<dbReference type="InterPro" id="IPR001926">
    <property type="entry name" value="TrpB-like_PALP"/>
</dbReference>
<dbReference type="InterPro" id="IPR036052">
    <property type="entry name" value="TrpB-like_PALP_sf"/>
</dbReference>
<dbReference type="NCBIfam" id="TIGR00262">
    <property type="entry name" value="trpA"/>
    <property type="match status" value="1"/>
</dbReference>
<dbReference type="NCBIfam" id="TIGR00263">
    <property type="entry name" value="trpB"/>
    <property type="match status" value="1"/>
</dbReference>
<dbReference type="PANTHER" id="PTHR48077:SF3">
    <property type="entry name" value="TRYPTOPHAN SYNTHASE"/>
    <property type="match status" value="1"/>
</dbReference>
<dbReference type="PANTHER" id="PTHR48077">
    <property type="entry name" value="TRYPTOPHAN SYNTHASE-RELATED"/>
    <property type="match status" value="1"/>
</dbReference>
<dbReference type="Pfam" id="PF00291">
    <property type="entry name" value="PALP"/>
    <property type="match status" value="1"/>
</dbReference>
<dbReference type="Pfam" id="PF00290">
    <property type="entry name" value="Trp_syntA"/>
    <property type="match status" value="1"/>
</dbReference>
<dbReference type="SUPFAM" id="SSF51366">
    <property type="entry name" value="Ribulose-phoshate binding barrel"/>
    <property type="match status" value="1"/>
</dbReference>
<dbReference type="SUPFAM" id="SSF53686">
    <property type="entry name" value="Tryptophan synthase beta subunit-like PLP-dependent enzymes"/>
    <property type="match status" value="1"/>
</dbReference>
<dbReference type="PROSITE" id="PS00167">
    <property type="entry name" value="TRP_SYNTHASE_ALPHA"/>
    <property type="match status" value="1"/>
</dbReference>
<dbReference type="PROSITE" id="PS00168">
    <property type="entry name" value="TRP_SYNTHASE_BETA"/>
    <property type="match status" value="1"/>
</dbReference>
<evidence type="ECO:0000250" key="1"/>
<evidence type="ECO:0000256" key="2">
    <source>
        <dbReference type="SAM" id="MobiDB-lite"/>
    </source>
</evidence>
<evidence type="ECO:0000305" key="3"/>